<dbReference type="EMBL" id="CP001139">
    <property type="protein sequence ID" value="ACH66985.1"/>
    <property type="molecule type" value="Genomic_DNA"/>
</dbReference>
<dbReference type="RefSeq" id="WP_005417486.1">
    <property type="nucleotide sequence ID" value="NC_011184.1"/>
</dbReference>
<dbReference type="SMR" id="B5F9M4"/>
<dbReference type="GeneID" id="54163008"/>
<dbReference type="KEGG" id="vfm:VFMJ11_0371"/>
<dbReference type="HOGENOM" id="CLU_106757_2_0_6"/>
<dbReference type="Proteomes" id="UP000001857">
    <property type="component" value="Chromosome I"/>
</dbReference>
<dbReference type="GO" id="GO:0005829">
    <property type="term" value="C:cytosol"/>
    <property type="evidence" value="ECO:0007669"/>
    <property type="project" value="TreeGrafter"/>
</dbReference>
<dbReference type="GO" id="GO:0043022">
    <property type="term" value="F:ribosome binding"/>
    <property type="evidence" value="ECO:0007669"/>
    <property type="project" value="UniProtKB-UniRule"/>
</dbReference>
<dbReference type="GO" id="GO:0019843">
    <property type="term" value="F:rRNA binding"/>
    <property type="evidence" value="ECO:0007669"/>
    <property type="project" value="UniProtKB-UniRule"/>
</dbReference>
<dbReference type="GO" id="GO:1902626">
    <property type="term" value="P:assembly of large subunit precursor of preribosome"/>
    <property type="evidence" value="ECO:0007669"/>
    <property type="project" value="UniProtKB-UniRule"/>
</dbReference>
<dbReference type="CDD" id="cd16331">
    <property type="entry name" value="YjgA-like"/>
    <property type="match status" value="1"/>
</dbReference>
<dbReference type="FunFam" id="1.10.60.30:FF:000002">
    <property type="entry name" value="UPF0307 protein YjgA"/>
    <property type="match status" value="1"/>
</dbReference>
<dbReference type="Gene3D" id="1.10.60.30">
    <property type="entry name" value="PSPTO4464-like domains"/>
    <property type="match status" value="2"/>
</dbReference>
<dbReference type="HAMAP" id="MF_00765">
    <property type="entry name" value="DarP"/>
    <property type="match status" value="1"/>
</dbReference>
<dbReference type="InterPro" id="IPR006839">
    <property type="entry name" value="DarP"/>
</dbReference>
<dbReference type="InterPro" id="IPR023153">
    <property type="entry name" value="DarP_sf"/>
</dbReference>
<dbReference type="NCBIfam" id="NF003593">
    <property type="entry name" value="PRK05255.1-1"/>
    <property type="match status" value="1"/>
</dbReference>
<dbReference type="PANTHER" id="PTHR38101">
    <property type="entry name" value="UPF0307 PROTEIN YJGA"/>
    <property type="match status" value="1"/>
</dbReference>
<dbReference type="PANTHER" id="PTHR38101:SF1">
    <property type="entry name" value="UPF0307 PROTEIN YJGA"/>
    <property type="match status" value="1"/>
</dbReference>
<dbReference type="Pfam" id="PF04751">
    <property type="entry name" value="DarP"/>
    <property type="match status" value="1"/>
</dbReference>
<dbReference type="PIRSF" id="PIRSF016183">
    <property type="entry name" value="UCP016183"/>
    <property type="match status" value="1"/>
</dbReference>
<dbReference type="SUPFAM" id="SSF158710">
    <property type="entry name" value="PSPTO4464-like"/>
    <property type="match status" value="1"/>
</dbReference>
<accession>B5F9M4</accession>
<keyword id="KW-0963">Cytoplasm</keyword>
<keyword id="KW-0690">Ribosome biogenesis</keyword>
<keyword id="KW-0694">RNA-binding</keyword>
<keyword id="KW-0699">rRNA-binding</keyword>
<feature type="chain" id="PRO_1000198403" description="Dual-action ribosomal maturation protein DarP">
    <location>
        <begin position="1"/>
        <end position="176"/>
    </location>
</feature>
<organism>
    <name type="scientific">Aliivibrio fischeri (strain MJ11)</name>
    <name type="common">Vibrio fischeri</name>
    <dbReference type="NCBI Taxonomy" id="388396"/>
    <lineage>
        <taxon>Bacteria</taxon>
        <taxon>Pseudomonadati</taxon>
        <taxon>Pseudomonadota</taxon>
        <taxon>Gammaproteobacteria</taxon>
        <taxon>Vibrionales</taxon>
        <taxon>Vibrionaceae</taxon>
        <taxon>Aliivibrio</taxon>
    </lineage>
</organism>
<evidence type="ECO:0000255" key="1">
    <source>
        <dbReference type="HAMAP-Rule" id="MF_00765"/>
    </source>
</evidence>
<sequence>MARKNQKAPWEEEEEIIWVSKTEMKNDMEDLQKLGEELVGLKPSVLAKFPLSDDLREAINDAQRFKNEAKRRQLQFIGKLMRNEDPEPIQLALDKIRNKHSQATAALHKLETLRDRMIEEGDAVIEEVMVKYPDADRQRFRQLARQAKKEKASNKPPKAFREIFQILKDLYLNEDL</sequence>
<proteinExistence type="inferred from homology"/>
<name>DARP_ALIFM</name>
<gene>
    <name evidence="1" type="primary">darP</name>
    <name type="ordered locus">VFMJ11_0371</name>
</gene>
<protein>
    <recommendedName>
        <fullName evidence="1">Dual-action ribosomal maturation protein DarP</fullName>
    </recommendedName>
    <alternativeName>
        <fullName evidence="1">Large ribosomal subunit assembly factor DarP</fullName>
    </alternativeName>
</protein>
<reference key="1">
    <citation type="submission" date="2008-08" db="EMBL/GenBank/DDBJ databases">
        <title>Complete sequence of Vibrio fischeri strain MJ11.</title>
        <authorList>
            <person name="Mandel M.J."/>
            <person name="Stabb E.V."/>
            <person name="Ruby E.G."/>
            <person name="Ferriera S."/>
            <person name="Johnson J."/>
            <person name="Kravitz S."/>
            <person name="Beeson K."/>
            <person name="Sutton G."/>
            <person name="Rogers Y.-H."/>
            <person name="Friedman R."/>
            <person name="Frazier M."/>
            <person name="Venter J.C."/>
        </authorList>
    </citation>
    <scope>NUCLEOTIDE SEQUENCE [LARGE SCALE GENOMIC DNA]</scope>
    <source>
        <strain>MJ11</strain>
    </source>
</reference>
<comment type="function">
    <text evidence="1">Member of a network of 50S ribosomal subunit biogenesis factors which assembles along the 30S-50S interface, preventing incorrect 23S rRNA structures from forming. Promotes peptidyl transferase center (PTC) maturation.</text>
</comment>
<comment type="subcellular location">
    <subcellularLocation>
        <location evidence="1">Cytoplasm</location>
    </subcellularLocation>
    <text evidence="1">Associates with late stage pre-50S ribosomal subunits.</text>
</comment>
<comment type="similarity">
    <text evidence="1">Belongs to the DarP family.</text>
</comment>